<evidence type="ECO:0000255" key="1">
    <source>
        <dbReference type="HAMAP-Rule" id="MF_01570"/>
    </source>
</evidence>
<evidence type="ECO:0000305" key="2"/>
<dbReference type="EC" id="6.1.1.15" evidence="1"/>
<dbReference type="EMBL" id="X84019">
    <property type="protein sequence ID" value="CAA58846.1"/>
    <property type="molecule type" value="Genomic_DNA"/>
</dbReference>
<dbReference type="EMBL" id="CP002850">
    <property type="protein sequence ID" value="AEH62826.1"/>
    <property type="molecule type" value="Genomic_DNA"/>
</dbReference>
<dbReference type="RefSeq" id="WP_012817305.1">
    <property type="nucleotide sequence ID" value="NC_017262.1"/>
</dbReference>
<dbReference type="SMR" id="F8DT95"/>
<dbReference type="GeneID" id="79904346"/>
<dbReference type="KEGG" id="zmm:Zmob_0991"/>
<dbReference type="eggNOG" id="COG0442">
    <property type="taxonomic scope" value="Bacteria"/>
</dbReference>
<dbReference type="HOGENOM" id="CLU_016739_4_2_5"/>
<dbReference type="OrthoDB" id="9809052at2"/>
<dbReference type="Proteomes" id="UP000001494">
    <property type="component" value="Chromosome"/>
</dbReference>
<dbReference type="GO" id="GO:0005829">
    <property type="term" value="C:cytosol"/>
    <property type="evidence" value="ECO:0007669"/>
    <property type="project" value="TreeGrafter"/>
</dbReference>
<dbReference type="GO" id="GO:0005524">
    <property type="term" value="F:ATP binding"/>
    <property type="evidence" value="ECO:0007669"/>
    <property type="project" value="UniProtKB-UniRule"/>
</dbReference>
<dbReference type="GO" id="GO:0004827">
    <property type="term" value="F:proline-tRNA ligase activity"/>
    <property type="evidence" value="ECO:0007669"/>
    <property type="project" value="UniProtKB-UniRule"/>
</dbReference>
<dbReference type="GO" id="GO:0006433">
    <property type="term" value="P:prolyl-tRNA aminoacylation"/>
    <property type="evidence" value="ECO:0007669"/>
    <property type="project" value="UniProtKB-UniRule"/>
</dbReference>
<dbReference type="CDD" id="cd00861">
    <property type="entry name" value="ProRS_anticodon_short"/>
    <property type="match status" value="1"/>
</dbReference>
<dbReference type="CDD" id="cd00779">
    <property type="entry name" value="ProRS_core_prok"/>
    <property type="match status" value="1"/>
</dbReference>
<dbReference type="FunFam" id="3.30.930.10:FF:000042">
    <property type="entry name" value="probable proline--tRNA ligase, mitochondrial"/>
    <property type="match status" value="1"/>
</dbReference>
<dbReference type="FunFam" id="3.40.50.800:FF:000032">
    <property type="entry name" value="Proline--tRNA ligase"/>
    <property type="match status" value="1"/>
</dbReference>
<dbReference type="Gene3D" id="3.40.50.800">
    <property type="entry name" value="Anticodon-binding domain"/>
    <property type="match status" value="1"/>
</dbReference>
<dbReference type="Gene3D" id="3.30.930.10">
    <property type="entry name" value="Bira Bifunctional Protein, Domain 2"/>
    <property type="match status" value="1"/>
</dbReference>
<dbReference type="HAMAP" id="MF_01570">
    <property type="entry name" value="Pro_tRNA_synth_type2"/>
    <property type="match status" value="1"/>
</dbReference>
<dbReference type="InterPro" id="IPR002314">
    <property type="entry name" value="aa-tRNA-synt_IIb"/>
</dbReference>
<dbReference type="InterPro" id="IPR006195">
    <property type="entry name" value="aa-tRNA-synth_II"/>
</dbReference>
<dbReference type="InterPro" id="IPR045864">
    <property type="entry name" value="aa-tRNA-synth_II/BPL/LPL"/>
</dbReference>
<dbReference type="InterPro" id="IPR004154">
    <property type="entry name" value="Anticodon-bd"/>
</dbReference>
<dbReference type="InterPro" id="IPR036621">
    <property type="entry name" value="Anticodon-bd_dom_sf"/>
</dbReference>
<dbReference type="InterPro" id="IPR002316">
    <property type="entry name" value="Pro-tRNA-ligase_IIa"/>
</dbReference>
<dbReference type="InterPro" id="IPR004500">
    <property type="entry name" value="Pro-tRNA-synth_IIa_bac-type"/>
</dbReference>
<dbReference type="InterPro" id="IPR050062">
    <property type="entry name" value="Pro-tRNA_synthetase"/>
</dbReference>
<dbReference type="InterPro" id="IPR023716">
    <property type="entry name" value="Prolyl-tRNA_ligase_IIa_type2"/>
</dbReference>
<dbReference type="InterPro" id="IPR044140">
    <property type="entry name" value="ProRS_anticodon_short"/>
</dbReference>
<dbReference type="InterPro" id="IPR033730">
    <property type="entry name" value="ProRS_core_prok"/>
</dbReference>
<dbReference type="NCBIfam" id="NF008979">
    <property type="entry name" value="PRK12325.1"/>
    <property type="match status" value="1"/>
</dbReference>
<dbReference type="NCBIfam" id="TIGR00409">
    <property type="entry name" value="proS_fam_II"/>
    <property type="match status" value="1"/>
</dbReference>
<dbReference type="PANTHER" id="PTHR42753">
    <property type="entry name" value="MITOCHONDRIAL RIBOSOME PROTEIN L39/PROLYL-TRNA LIGASE FAMILY MEMBER"/>
    <property type="match status" value="1"/>
</dbReference>
<dbReference type="PANTHER" id="PTHR42753:SF2">
    <property type="entry name" value="PROLINE--TRNA LIGASE"/>
    <property type="match status" value="1"/>
</dbReference>
<dbReference type="Pfam" id="PF03129">
    <property type="entry name" value="HGTP_anticodon"/>
    <property type="match status" value="1"/>
</dbReference>
<dbReference type="Pfam" id="PF00587">
    <property type="entry name" value="tRNA-synt_2b"/>
    <property type="match status" value="1"/>
</dbReference>
<dbReference type="PRINTS" id="PR01046">
    <property type="entry name" value="TRNASYNTHPRO"/>
</dbReference>
<dbReference type="SUPFAM" id="SSF52954">
    <property type="entry name" value="Class II aaRS ABD-related"/>
    <property type="match status" value="1"/>
</dbReference>
<dbReference type="SUPFAM" id="SSF55681">
    <property type="entry name" value="Class II aaRS and biotin synthetases"/>
    <property type="match status" value="1"/>
</dbReference>
<dbReference type="PROSITE" id="PS50862">
    <property type="entry name" value="AA_TRNA_LIGASE_II"/>
    <property type="match status" value="1"/>
</dbReference>
<proteinExistence type="inferred from homology"/>
<protein>
    <recommendedName>
        <fullName evidence="1">Proline--tRNA ligase</fullName>
        <ecNumber evidence="1">6.1.1.15</ecNumber>
    </recommendedName>
    <alternativeName>
        <fullName evidence="1">Prolyl-tRNA synthetase</fullName>
        <shortName evidence="1">ProRS</shortName>
    </alternativeName>
</protein>
<gene>
    <name evidence="1" type="primary">proS</name>
    <name type="ordered locus">Zmob_0991</name>
</gene>
<sequence>MRLSRYFLPVMKETPADAQIISHKLMLRAGMIRQTAAGIYAWLPLGLRVLRRIEKIIREEQARAGALELLMPTLQTADLWRESGRYDAYGPEMLRIKDRHNRELLYGPTNEEMITALIRDNLQSYRDLPRIFYHIQWKFRDEVRPRFGVMRGREFLMKDAYSFDIDETAGRHNYNRMFVAYLNSFSRLGLRAIPMQADTGPIGGDLSHEFIVLAPNGESDVFYHSNWEQPTRHIEADFDDPKALQSIVNDHISDYAATDEKRDPLREAQAGDKLRQSRGIEVGHIFFFGTKYSKPMGFTLPGPDGKPIPIQMGSYGIGISRLLGAIIEASHDDNGIIWPEAVAPYHVGLINLRIDDENCRAIADSLYQRLEAAGIDTLYDDRNERGGAKFATMDLIGLPWQVVIGPKGAEKGVVELKNRASGEKQTISVEDAFNLLTAGHQQR</sequence>
<name>SYP_ZYMMA</name>
<organism>
    <name type="scientific">Zymomonas mobilis subsp. mobilis (strain ATCC 10988 / DSM 424 / LMG 404 / NCIMB 8938 / NRRL B-806 / ZM1)</name>
    <dbReference type="NCBI Taxonomy" id="555217"/>
    <lineage>
        <taxon>Bacteria</taxon>
        <taxon>Pseudomonadati</taxon>
        <taxon>Pseudomonadota</taxon>
        <taxon>Alphaproteobacteria</taxon>
        <taxon>Sphingomonadales</taxon>
        <taxon>Zymomonadaceae</taxon>
        <taxon>Zymomonas</taxon>
    </lineage>
</organism>
<keyword id="KW-0030">Aminoacyl-tRNA synthetase</keyword>
<keyword id="KW-0067">ATP-binding</keyword>
<keyword id="KW-0963">Cytoplasm</keyword>
<keyword id="KW-0436">Ligase</keyword>
<keyword id="KW-0547">Nucleotide-binding</keyword>
<keyword id="KW-0648">Protein biosynthesis</keyword>
<reference key="1">
    <citation type="journal article" date="1996" name="Arch. Microbiol.">
        <title>The gluEMP operon from Zymomonas mobilis encodes a high-affinity glutamate carrier with similarity to binding-protein-dependent transport systems.</title>
        <authorList>
            <person name="Peekhaus N."/>
            <person name="Kramer R."/>
        </authorList>
    </citation>
    <scope>NUCLEOTIDE SEQUENCE [GENOMIC DNA]</scope>
    <source>
        <strain>ATCC 10988 / DSM 424 / CCUG 17860 / LMG 404 / NCIMB 8938 / NRRL B-806 / ZM1</strain>
    </source>
</reference>
<reference key="2">
    <citation type="journal article" date="2011" name="J. Bacteriol.">
        <title>Genome sequence of the ethanol-producing Zymomonas mobilis subsp. mobilis lectotype strain ATCC 10988.</title>
        <authorList>
            <person name="Pappas K.M."/>
            <person name="Kouvelis V.N."/>
            <person name="Saunders E."/>
            <person name="Brettin T.S."/>
            <person name="Bruce D."/>
            <person name="Detter C."/>
            <person name="Balakireva M."/>
            <person name="Han C.S."/>
            <person name="Savvakis G."/>
            <person name="Kyrpides N.C."/>
            <person name="Typas M.A."/>
        </authorList>
    </citation>
    <scope>NUCLEOTIDE SEQUENCE [LARGE SCALE GENOMIC DNA]</scope>
    <source>
        <strain>ATCC 10988 / DSM 424 / CCUG 17860 / LMG 404 / NCIMB 8938 / NRRL B-806 / ZM1</strain>
    </source>
</reference>
<comment type="function">
    <text evidence="1">Catalyzes the attachment of proline to tRNA(Pro) in a two-step reaction: proline is first activated by ATP to form Pro-AMP and then transferred to the acceptor end of tRNA(Pro).</text>
</comment>
<comment type="catalytic activity">
    <reaction evidence="1">
        <text>tRNA(Pro) + L-proline + ATP = L-prolyl-tRNA(Pro) + AMP + diphosphate</text>
        <dbReference type="Rhea" id="RHEA:14305"/>
        <dbReference type="Rhea" id="RHEA-COMP:9700"/>
        <dbReference type="Rhea" id="RHEA-COMP:9702"/>
        <dbReference type="ChEBI" id="CHEBI:30616"/>
        <dbReference type="ChEBI" id="CHEBI:33019"/>
        <dbReference type="ChEBI" id="CHEBI:60039"/>
        <dbReference type="ChEBI" id="CHEBI:78442"/>
        <dbReference type="ChEBI" id="CHEBI:78532"/>
        <dbReference type="ChEBI" id="CHEBI:456215"/>
        <dbReference type="EC" id="6.1.1.15"/>
    </reaction>
</comment>
<comment type="subunit">
    <text evidence="1">Homodimer.</text>
</comment>
<comment type="subcellular location">
    <subcellularLocation>
        <location evidence="1">Cytoplasm</location>
    </subcellularLocation>
</comment>
<comment type="similarity">
    <text evidence="1">Belongs to the class-II aminoacyl-tRNA synthetase family. ProS type 2 subfamily.</text>
</comment>
<feature type="chain" id="PRO_0000414238" description="Proline--tRNA ligase">
    <location>
        <begin position="1"/>
        <end position="443"/>
    </location>
</feature>
<feature type="sequence conflict" description="In Ref. 1; CAA58846." evidence="2" ref="1">
    <original>A</original>
    <variation>S</variation>
    <location>
        <position position="37"/>
    </location>
</feature>
<feature type="sequence conflict" description="In Ref. 1; CAA58846." evidence="2" ref="1">
    <original>RRI</original>
    <variation>GRN</variation>
    <location>
        <begin position="51"/>
        <end position="53"/>
    </location>
</feature>
<feature type="sequence conflict" description="In Ref. 1; CAA58846." evidence="2" ref="1">
    <original>L</original>
    <variation>A</variation>
    <location>
        <position position="67"/>
    </location>
</feature>
<feature type="sequence conflict" description="In Ref. 1; CAA58846." evidence="2" ref="1">
    <original>R</original>
    <variation>P</variation>
    <location>
        <position position="81"/>
    </location>
</feature>
<feature type="sequence conflict" description="In Ref. 1; CAA58846." evidence="2" ref="1">
    <original>I</original>
    <variation>F</variation>
    <location>
        <position position="96"/>
    </location>
</feature>
<feature type="sequence conflict" description="In Ref. 1; CAA58846." evidence="2" ref="1">
    <original>R</original>
    <variation>C</variation>
    <location>
        <position position="102"/>
    </location>
</feature>
<feature type="sequence conflict" description="In Ref. 1; CAA58846." evidence="2" ref="1">
    <original>D</original>
    <variation>H</variation>
    <location>
        <position position="120"/>
    </location>
</feature>
<feature type="sequence conflict" description="In Ref. 1; CAA58846." evidence="2" ref="1">
    <original>RDLPR</original>
    <variation>AILAG</variation>
    <location>
        <begin position="126"/>
        <end position="130"/>
    </location>
</feature>
<feature type="sequence conflict" description="In Ref. 1; CAA58846." evidence="2" ref="1">
    <original>A</original>
    <variation>G</variation>
    <location>
        <position position="180"/>
    </location>
</feature>
<feature type="sequence conflict" description="In Ref. 1; CAA58846." evidence="2" ref="1">
    <original>SD</original>
    <variation>RH</variation>
    <location>
        <begin position="219"/>
        <end position="220"/>
    </location>
</feature>
<feature type="sequence conflict" description="In Ref. 1; CAA58846." evidence="2" ref="1">
    <original>V</original>
    <variation>I</variation>
    <location>
        <position position="414"/>
    </location>
</feature>
<accession>F8DT95</accession>
<accession>P75000</accession>
<accession>Q5NQC1</accession>